<organism>
    <name type="scientific">Helicobacter hepaticus (strain ATCC 51449 / 3B1)</name>
    <dbReference type="NCBI Taxonomy" id="235279"/>
    <lineage>
        <taxon>Bacteria</taxon>
        <taxon>Pseudomonadati</taxon>
        <taxon>Campylobacterota</taxon>
        <taxon>Epsilonproteobacteria</taxon>
        <taxon>Campylobacterales</taxon>
        <taxon>Helicobacteraceae</taxon>
        <taxon>Helicobacter</taxon>
    </lineage>
</organism>
<feature type="chain" id="PRO_0000151910" description="ATP phosphoribosyltransferase">
    <location>
        <begin position="1"/>
        <end position="205"/>
    </location>
</feature>
<protein>
    <recommendedName>
        <fullName evidence="1">ATP phosphoribosyltransferase</fullName>
        <shortName evidence="1">ATP-PRT</shortName>
        <shortName evidence="1">ATP-PRTase</shortName>
        <ecNumber evidence="1">2.4.2.17</ecNumber>
    </recommendedName>
</protein>
<reference key="1">
    <citation type="journal article" date="2003" name="Proc. Natl. Acad. Sci. U.S.A.">
        <title>The complete genome sequence of the carcinogenic bacterium Helicobacter hepaticus.</title>
        <authorList>
            <person name="Suerbaum S."/>
            <person name="Josenhans C."/>
            <person name="Sterzenbach T."/>
            <person name="Drescher B."/>
            <person name="Brandt P."/>
            <person name="Bell M."/>
            <person name="Droege M."/>
            <person name="Fartmann B."/>
            <person name="Fischer H.-P."/>
            <person name="Ge Z."/>
            <person name="Hoerster A."/>
            <person name="Holland R."/>
            <person name="Klein K."/>
            <person name="Koenig J."/>
            <person name="Macko L."/>
            <person name="Mendz G.L."/>
            <person name="Nyakatura G."/>
            <person name="Schauer D.B."/>
            <person name="Shen Z."/>
            <person name="Weber J."/>
            <person name="Frosch M."/>
            <person name="Fox J.G."/>
        </authorList>
    </citation>
    <scope>NUCLEOTIDE SEQUENCE [LARGE SCALE GENOMIC DNA]</scope>
    <source>
        <strain>ATCC 51449 / 3B1</strain>
    </source>
</reference>
<accession>Q7VJU4</accession>
<proteinExistence type="inferred from homology"/>
<keyword id="KW-0028">Amino-acid biosynthesis</keyword>
<keyword id="KW-0067">ATP-binding</keyword>
<keyword id="KW-0963">Cytoplasm</keyword>
<keyword id="KW-0328">Glycosyltransferase</keyword>
<keyword id="KW-0368">Histidine biosynthesis</keyword>
<keyword id="KW-0547">Nucleotide-binding</keyword>
<keyword id="KW-1185">Reference proteome</keyword>
<keyword id="KW-0808">Transferase</keyword>
<comment type="function">
    <text evidence="1">Catalyzes the condensation of ATP and 5-phosphoribose 1-diphosphate to form N'-(5'-phosphoribosyl)-ATP (PR-ATP). Has a crucial role in the pathway because the rate of histidine biosynthesis seems to be controlled primarily by regulation of HisG enzymatic activity.</text>
</comment>
<comment type="catalytic activity">
    <reaction evidence="1">
        <text>1-(5-phospho-beta-D-ribosyl)-ATP + diphosphate = 5-phospho-alpha-D-ribose 1-diphosphate + ATP</text>
        <dbReference type="Rhea" id="RHEA:18473"/>
        <dbReference type="ChEBI" id="CHEBI:30616"/>
        <dbReference type="ChEBI" id="CHEBI:33019"/>
        <dbReference type="ChEBI" id="CHEBI:58017"/>
        <dbReference type="ChEBI" id="CHEBI:73183"/>
        <dbReference type="EC" id="2.4.2.17"/>
    </reaction>
</comment>
<comment type="pathway">
    <text evidence="1">Amino-acid biosynthesis; L-histidine biosynthesis; L-histidine from 5-phospho-alpha-D-ribose 1-diphosphate: step 1/9.</text>
</comment>
<comment type="subunit">
    <text evidence="1">Heteromultimer composed of HisG and HisZ subunits.</text>
</comment>
<comment type="subcellular location">
    <subcellularLocation>
        <location evidence="1">Cytoplasm</location>
    </subcellularLocation>
</comment>
<comment type="domain">
    <text>Lacks the C-terminal regulatory region which is replaced by HisZ.</text>
</comment>
<comment type="similarity">
    <text evidence="1">Belongs to the ATP phosphoribosyltransferase family. Short subfamily.</text>
</comment>
<evidence type="ECO:0000255" key="1">
    <source>
        <dbReference type="HAMAP-Rule" id="MF_01018"/>
    </source>
</evidence>
<gene>
    <name evidence="1" type="primary">hisG</name>
    <name type="ordered locus">HH_0149</name>
</gene>
<sequence length="205" mass="22959">MIKVALPKGRIANESLALFERLYGSKFVFDDRKLILEHQGFIFMLVRSQDVPTYVIHQAVDIGIVGLDVIEEQQANVVKLLNLGIGKCKVVVGSELGKSIDYQKPQLKIATKMPHITRKYFSNKAISIEALKLYGSIELAPLVGLSDAIVDIVETGVTMKQNNLKIDEVIMESSAYLIANKNSFYEKKELILALYERLKSTLDSK</sequence>
<dbReference type="EC" id="2.4.2.17" evidence="1"/>
<dbReference type="EMBL" id="AE017125">
    <property type="protein sequence ID" value="AAP76746.1"/>
    <property type="molecule type" value="Genomic_DNA"/>
</dbReference>
<dbReference type="RefSeq" id="WP_011114992.1">
    <property type="nucleotide sequence ID" value="NC_004917.1"/>
</dbReference>
<dbReference type="SMR" id="Q7VJU4"/>
<dbReference type="STRING" id="235279.HH_0149"/>
<dbReference type="KEGG" id="hhe:HH_0149"/>
<dbReference type="eggNOG" id="COG0040">
    <property type="taxonomic scope" value="Bacteria"/>
</dbReference>
<dbReference type="HOGENOM" id="CLU_038115_2_0_7"/>
<dbReference type="OrthoDB" id="9801867at2"/>
<dbReference type="UniPathway" id="UPA00031">
    <property type="reaction ID" value="UER00006"/>
</dbReference>
<dbReference type="Proteomes" id="UP000002495">
    <property type="component" value="Chromosome"/>
</dbReference>
<dbReference type="GO" id="GO:0005737">
    <property type="term" value="C:cytoplasm"/>
    <property type="evidence" value="ECO:0007669"/>
    <property type="project" value="UniProtKB-SubCell"/>
</dbReference>
<dbReference type="GO" id="GO:0005524">
    <property type="term" value="F:ATP binding"/>
    <property type="evidence" value="ECO:0007669"/>
    <property type="project" value="UniProtKB-KW"/>
</dbReference>
<dbReference type="GO" id="GO:0003879">
    <property type="term" value="F:ATP phosphoribosyltransferase activity"/>
    <property type="evidence" value="ECO:0007669"/>
    <property type="project" value="UniProtKB-UniRule"/>
</dbReference>
<dbReference type="GO" id="GO:0000105">
    <property type="term" value="P:L-histidine biosynthetic process"/>
    <property type="evidence" value="ECO:0007669"/>
    <property type="project" value="UniProtKB-UniRule"/>
</dbReference>
<dbReference type="CDD" id="cd13595">
    <property type="entry name" value="PBP2_HisGs"/>
    <property type="match status" value="1"/>
</dbReference>
<dbReference type="FunFam" id="3.40.190.10:FF:000008">
    <property type="entry name" value="ATP phosphoribosyltransferase"/>
    <property type="match status" value="1"/>
</dbReference>
<dbReference type="Gene3D" id="3.40.190.10">
    <property type="entry name" value="Periplasmic binding protein-like II"/>
    <property type="match status" value="2"/>
</dbReference>
<dbReference type="HAMAP" id="MF_01018">
    <property type="entry name" value="HisG_Short"/>
    <property type="match status" value="1"/>
</dbReference>
<dbReference type="InterPro" id="IPR013820">
    <property type="entry name" value="ATP_PRibTrfase_cat"/>
</dbReference>
<dbReference type="InterPro" id="IPR018198">
    <property type="entry name" value="ATP_PRibTrfase_CS"/>
</dbReference>
<dbReference type="InterPro" id="IPR001348">
    <property type="entry name" value="ATP_PRibTrfase_HisG"/>
</dbReference>
<dbReference type="InterPro" id="IPR024893">
    <property type="entry name" value="ATP_PRibTrfase_HisG_short"/>
</dbReference>
<dbReference type="NCBIfam" id="TIGR00070">
    <property type="entry name" value="hisG"/>
    <property type="match status" value="1"/>
</dbReference>
<dbReference type="PANTHER" id="PTHR21403:SF8">
    <property type="entry name" value="ATP PHOSPHORIBOSYLTRANSFERASE"/>
    <property type="match status" value="1"/>
</dbReference>
<dbReference type="PANTHER" id="PTHR21403">
    <property type="entry name" value="ATP PHOSPHORIBOSYLTRANSFERASE ATP-PRTASE"/>
    <property type="match status" value="1"/>
</dbReference>
<dbReference type="Pfam" id="PF01634">
    <property type="entry name" value="HisG"/>
    <property type="match status" value="1"/>
</dbReference>
<dbReference type="SUPFAM" id="SSF53850">
    <property type="entry name" value="Periplasmic binding protein-like II"/>
    <property type="match status" value="1"/>
</dbReference>
<dbReference type="PROSITE" id="PS01316">
    <property type="entry name" value="ATP_P_PHORIBOSYLTR"/>
    <property type="match status" value="1"/>
</dbReference>
<name>HIS1_HELHP</name>